<dbReference type="EC" id="2.1.1.173" evidence="1"/>
<dbReference type="EC" id="2.1.1.264" evidence="1"/>
<dbReference type="EMBL" id="CP000967">
    <property type="protein sequence ID" value="ACD58723.1"/>
    <property type="molecule type" value="Genomic_DNA"/>
</dbReference>
<dbReference type="SMR" id="B2SIS8"/>
<dbReference type="KEGG" id="xop:PXO_00768"/>
<dbReference type="eggNOG" id="COG0116">
    <property type="taxonomic scope" value="Bacteria"/>
</dbReference>
<dbReference type="eggNOG" id="COG1092">
    <property type="taxonomic scope" value="Bacteria"/>
</dbReference>
<dbReference type="HOGENOM" id="CLU_014042_2_0_6"/>
<dbReference type="Proteomes" id="UP000001740">
    <property type="component" value="Chromosome"/>
</dbReference>
<dbReference type="GO" id="GO:0005737">
    <property type="term" value="C:cytoplasm"/>
    <property type="evidence" value="ECO:0007669"/>
    <property type="project" value="UniProtKB-SubCell"/>
</dbReference>
<dbReference type="GO" id="GO:0052915">
    <property type="term" value="F:23S rRNA (guanine(2445)-N(2))-methyltransferase activity"/>
    <property type="evidence" value="ECO:0007669"/>
    <property type="project" value="UniProtKB-UniRule"/>
</dbReference>
<dbReference type="GO" id="GO:0003723">
    <property type="term" value="F:RNA binding"/>
    <property type="evidence" value="ECO:0007669"/>
    <property type="project" value="UniProtKB-KW"/>
</dbReference>
<dbReference type="GO" id="GO:0070043">
    <property type="term" value="F:rRNA (guanine-N7-)-methyltransferase activity"/>
    <property type="evidence" value="ECO:0007669"/>
    <property type="project" value="UniProtKB-UniRule"/>
</dbReference>
<dbReference type="CDD" id="cd02440">
    <property type="entry name" value="AdoMet_MTases"/>
    <property type="match status" value="1"/>
</dbReference>
<dbReference type="CDD" id="cd11715">
    <property type="entry name" value="THUMP_AdoMetMT"/>
    <property type="match status" value="1"/>
</dbReference>
<dbReference type="FunFam" id="3.30.750.80:FF:000003">
    <property type="entry name" value="Ribosomal RNA large subunit methyltransferase K/L"/>
    <property type="match status" value="1"/>
</dbReference>
<dbReference type="Gene3D" id="3.30.2130.30">
    <property type="match status" value="1"/>
</dbReference>
<dbReference type="Gene3D" id="3.30.750.80">
    <property type="entry name" value="RNA methyltransferase domain (HRMD) like"/>
    <property type="match status" value="1"/>
</dbReference>
<dbReference type="Gene3D" id="3.40.50.150">
    <property type="entry name" value="Vaccinia Virus protein VP39"/>
    <property type="match status" value="2"/>
</dbReference>
<dbReference type="HAMAP" id="MF_01858">
    <property type="entry name" value="23SrRNA_methyltr_KL"/>
    <property type="match status" value="1"/>
</dbReference>
<dbReference type="InterPro" id="IPR017244">
    <property type="entry name" value="23SrRNA_methyltr_KL"/>
</dbReference>
<dbReference type="InterPro" id="IPR002052">
    <property type="entry name" value="DNA_methylase_N6_adenine_CS"/>
</dbReference>
<dbReference type="InterPro" id="IPR000241">
    <property type="entry name" value="RlmKL-like_Mtase"/>
</dbReference>
<dbReference type="InterPro" id="IPR053943">
    <property type="entry name" value="RlmKL-like_Mtase_CS"/>
</dbReference>
<dbReference type="InterPro" id="IPR054170">
    <property type="entry name" value="RlmL_1st"/>
</dbReference>
<dbReference type="InterPro" id="IPR019614">
    <property type="entry name" value="SAM-dep_methyl-trfase"/>
</dbReference>
<dbReference type="InterPro" id="IPR029063">
    <property type="entry name" value="SAM-dependent_MTases_sf"/>
</dbReference>
<dbReference type="InterPro" id="IPR004114">
    <property type="entry name" value="THUMP_dom"/>
</dbReference>
<dbReference type="NCBIfam" id="NF008748">
    <property type="entry name" value="PRK11783.1"/>
    <property type="match status" value="1"/>
</dbReference>
<dbReference type="PANTHER" id="PTHR47313">
    <property type="entry name" value="RIBOSOMAL RNA LARGE SUBUNIT METHYLTRANSFERASE K/L"/>
    <property type="match status" value="1"/>
</dbReference>
<dbReference type="PANTHER" id="PTHR47313:SF1">
    <property type="entry name" value="RIBOSOMAL RNA LARGE SUBUNIT METHYLTRANSFERASE K_L"/>
    <property type="match status" value="1"/>
</dbReference>
<dbReference type="Pfam" id="PF10672">
    <property type="entry name" value="Methyltrans_SAM"/>
    <property type="match status" value="1"/>
</dbReference>
<dbReference type="Pfam" id="PF22020">
    <property type="entry name" value="RlmL_1st"/>
    <property type="match status" value="1"/>
</dbReference>
<dbReference type="Pfam" id="PF02926">
    <property type="entry name" value="THUMP"/>
    <property type="match status" value="1"/>
</dbReference>
<dbReference type="Pfam" id="PF01170">
    <property type="entry name" value="UPF0020"/>
    <property type="match status" value="1"/>
</dbReference>
<dbReference type="PIRSF" id="PIRSF037618">
    <property type="entry name" value="RNA_Mtase_bacteria_prd"/>
    <property type="match status" value="1"/>
</dbReference>
<dbReference type="SMART" id="SM00981">
    <property type="entry name" value="THUMP"/>
    <property type="match status" value="1"/>
</dbReference>
<dbReference type="SUPFAM" id="SSF53335">
    <property type="entry name" value="S-adenosyl-L-methionine-dependent methyltransferases"/>
    <property type="match status" value="2"/>
</dbReference>
<dbReference type="PROSITE" id="PS51165">
    <property type="entry name" value="THUMP"/>
    <property type="match status" value="1"/>
</dbReference>
<dbReference type="PROSITE" id="PS01261">
    <property type="entry name" value="UPF0020"/>
    <property type="match status" value="1"/>
</dbReference>
<protein>
    <recommendedName>
        <fullName evidence="1">Ribosomal RNA large subunit methyltransferase K/L</fullName>
    </recommendedName>
    <domain>
        <recommendedName>
            <fullName evidence="1">23S rRNA m2G2445 methyltransferase</fullName>
            <ecNumber evidence="1">2.1.1.173</ecNumber>
        </recommendedName>
        <alternativeName>
            <fullName evidence="1">rRNA (guanine-N(2)-)-methyltransferase RlmL</fullName>
        </alternativeName>
    </domain>
    <domain>
        <recommendedName>
            <fullName evidence="1">23S rRNA m7G2069 methyltransferase</fullName>
            <ecNumber evidence="1">2.1.1.264</ecNumber>
        </recommendedName>
        <alternativeName>
            <fullName evidence="1">rRNA (guanine-N(7)-)-methyltransferase RlmK</fullName>
        </alternativeName>
    </domain>
</protein>
<keyword id="KW-0963">Cytoplasm</keyword>
<keyword id="KW-0489">Methyltransferase</keyword>
<keyword id="KW-0694">RNA-binding</keyword>
<keyword id="KW-0698">rRNA processing</keyword>
<keyword id="KW-0949">S-adenosyl-L-methionine</keyword>
<keyword id="KW-0808">Transferase</keyword>
<accession>B2SIS8</accession>
<feature type="chain" id="PRO_0000366860" description="Ribosomal RNA large subunit methyltransferase K/L">
    <location>
        <begin position="1"/>
        <end position="711"/>
    </location>
</feature>
<feature type="domain" description="THUMP" evidence="1">
    <location>
        <begin position="42"/>
        <end position="153"/>
    </location>
</feature>
<proteinExistence type="inferred from homology"/>
<comment type="function">
    <text evidence="1">Specifically methylates the guanine in position 2445 (m2G2445) and the guanine in position 2069 (m7G2069) of 23S rRNA.</text>
</comment>
<comment type="catalytic activity">
    <reaction evidence="1">
        <text>guanosine(2445) in 23S rRNA + S-adenosyl-L-methionine = N(2)-methylguanosine(2445) in 23S rRNA + S-adenosyl-L-homocysteine + H(+)</text>
        <dbReference type="Rhea" id="RHEA:42740"/>
        <dbReference type="Rhea" id="RHEA-COMP:10215"/>
        <dbReference type="Rhea" id="RHEA-COMP:10216"/>
        <dbReference type="ChEBI" id="CHEBI:15378"/>
        <dbReference type="ChEBI" id="CHEBI:57856"/>
        <dbReference type="ChEBI" id="CHEBI:59789"/>
        <dbReference type="ChEBI" id="CHEBI:74269"/>
        <dbReference type="ChEBI" id="CHEBI:74481"/>
        <dbReference type="EC" id="2.1.1.173"/>
    </reaction>
</comment>
<comment type="catalytic activity">
    <reaction evidence="1">
        <text>guanosine(2069) in 23S rRNA + S-adenosyl-L-methionine = N(2)-methylguanosine(2069) in 23S rRNA + S-adenosyl-L-homocysteine + H(+)</text>
        <dbReference type="Rhea" id="RHEA:43772"/>
        <dbReference type="Rhea" id="RHEA-COMP:10688"/>
        <dbReference type="Rhea" id="RHEA-COMP:10689"/>
        <dbReference type="ChEBI" id="CHEBI:15378"/>
        <dbReference type="ChEBI" id="CHEBI:57856"/>
        <dbReference type="ChEBI" id="CHEBI:59789"/>
        <dbReference type="ChEBI" id="CHEBI:74269"/>
        <dbReference type="ChEBI" id="CHEBI:74481"/>
        <dbReference type="EC" id="2.1.1.264"/>
    </reaction>
</comment>
<comment type="subcellular location">
    <subcellularLocation>
        <location evidence="1">Cytoplasm</location>
    </subcellularLocation>
</comment>
<comment type="similarity">
    <text evidence="1">Belongs to the methyltransferase superfamily. RlmKL family.</text>
</comment>
<name>RLMKL_XANOP</name>
<gene>
    <name evidence="1" type="primary">rlmL</name>
    <name type="ordered locus">PXO_00768</name>
</gene>
<reference key="1">
    <citation type="journal article" date="2008" name="BMC Genomics">
        <title>Genome sequence and rapid evolution of the rice pathogen Xanthomonas oryzae pv. oryzae PXO99A.</title>
        <authorList>
            <person name="Salzberg S.L."/>
            <person name="Sommer D.D."/>
            <person name="Schatz M.C."/>
            <person name="Phillippy A.M."/>
            <person name="Rabinowicz P.D."/>
            <person name="Tsuge S."/>
            <person name="Furutani A."/>
            <person name="Ochiai H."/>
            <person name="Delcher A.L."/>
            <person name="Kelley D."/>
            <person name="Madupu R."/>
            <person name="Puiu D."/>
            <person name="Radune D."/>
            <person name="Shumway M."/>
            <person name="Trapnell C."/>
            <person name="Aparna G."/>
            <person name="Jha G."/>
            <person name="Pandey A."/>
            <person name="Patil P.B."/>
            <person name="Ishihara H."/>
            <person name="Meyer D.F."/>
            <person name="Szurek B."/>
            <person name="Verdier V."/>
            <person name="Koebnik R."/>
            <person name="Dow J.M."/>
            <person name="Ryan R.P."/>
            <person name="Hirata H."/>
            <person name="Tsuyumu S."/>
            <person name="Won Lee S."/>
            <person name="Seo Y.-S."/>
            <person name="Sriariyanum M."/>
            <person name="Ronald P.C."/>
            <person name="Sonti R.V."/>
            <person name="Van Sluys M.-A."/>
            <person name="Leach J.E."/>
            <person name="White F.F."/>
            <person name="Bogdanove A.J."/>
        </authorList>
    </citation>
    <scope>NUCLEOTIDE SEQUENCE [LARGE SCALE GENOMIC DNA]</scope>
    <source>
        <strain>PXO99A</strain>
    </source>
</reference>
<organism>
    <name type="scientific">Xanthomonas oryzae pv. oryzae (strain PXO99A)</name>
    <dbReference type="NCBI Taxonomy" id="360094"/>
    <lineage>
        <taxon>Bacteria</taxon>
        <taxon>Pseudomonadati</taxon>
        <taxon>Pseudomonadota</taxon>
        <taxon>Gammaproteobacteria</taxon>
        <taxon>Lysobacterales</taxon>
        <taxon>Lysobacteraceae</taxon>
        <taxon>Xanthomonas</taxon>
    </lineage>
</organism>
<evidence type="ECO:0000255" key="1">
    <source>
        <dbReference type="HAMAP-Rule" id="MF_01858"/>
    </source>
</evidence>
<sequence>MKFFASCAKGLEYLLADELLALGASKATATISGVNVEGELRDAQRAVLWSRLASRVLWPLSEFDCPDEDALYAGVAELPWDAHLSVGHTLSVDAHVSGTAITHARYAAQRIKDAVVDTMRRQGLERPSVDVESPDLRLNLSLRKGRATISVDLGGGPLHRRGWRMAQNEAPLKENLAAAVLMRGGWPRAYADGGGLLDPMCGSGTLLIEGALMAADVAPGLQRYGSDLPSRWRGFDRNGWQQLVSEARERDSVGRAALKQVIHGSDMDPHAIRAAKENAQVAGVAEAIWFGVCEVGELQTPPQATGVVVCNPPYDERLAADAALYRRLGDTLQCAVPQWRASLLCGNAELAYATGLRAGKKYQLFNGAIECALIVCDPIAVPRRTPLAAPTALSEGAQMVANRLRKNLQKFKKWRAREGVECFRAYDADLPEYSAAIDVYQQADGDRRIFLHVQEYAAPATIPEADVRRRLNELLAAAREVFEVPAERVALKSRERGKGGSKYGRFEQRNEIVHVREHGALLRVNLFDYLDTGLFLDHRPLRGTMAQQSRGRRFLNLFCYTGVASVEAAVAGAASTTSVDLSGTYLQWCADNLALNGLAGSKHKLVQADALAWLEAERAHFDVIFCDPPTFSNSARAEDFDIQRAHVRLLRAAVARLAPGGVLYFSNNFRRFKLDEEGVAEFAQCEDISPRTIDPDFERHARIHRAWRLTA</sequence>